<accession>P58203</accession>
<gene>
    <name type="primary">flgI</name>
    <name type="ordered locus">Z1718</name>
    <name type="ordered locus">ECs1458</name>
</gene>
<organism>
    <name type="scientific">Escherichia coli O157:H7</name>
    <dbReference type="NCBI Taxonomy" id="83334"/>
    <lineage>
        <taxon>Bacteria</taxon>
        <taxon>Pseudomonadati</taxon>
        <taxon>Pseudomonadota</taxon>
        <taxon>Gammaproteobacteria</taxon>
        <taxon>Enterobacterales</taxon>
        <taxon>Enterobacteriaceae</taxon>
        <taxon>Escherichia</taxon>
    </lineage>
</organism>
<sequence>MIKFLSALILLLVTTAAQAERIRDLTSVQGVRQNSLIGYGLVVGLDGTGDQTTQTPFTTQTLNNMLSQLGITVPTGTNMQLKNVAAVMVTASLPPFGRQGQTIDVVVSSMGNAKSLRGGTLLMTPLKGVDSQVYALAQGNILVGGAGASAGGSSVQVNQLNGGRITNGAVIERELPSQFGVGNTLNLQLNDEDFSMAQQIADTINRVRGYGSATALDARTIQVRVPSGNSSQVRFLADIQNMQVNVTPQDAKVVINSRTGSVVMNREVTLDSCAIAQGNLSVTVNRQANVSQPDTPFGGGQTVVTPQTQIDLRQSGGSLQSVRSSASLNNVVRALNALGATPMDLMSILQSMQSAGCLRAKLEII</sequence>
<dbReference type="EMBL" id="AE005174">
    <property type="protein sequence ID" value="AAG55826.1"/>
    <property type="molecule type" value="Genomic_DNA"/>
</dbReference>
<dbReference type="EMBL" id="BA000007">
    <property type="protein sequence ID" value="BAB34881.1"/>
    <property type="molecule type" value="Genomic_DNA"/>
</dbReference>
<dbReference type="PIR" id="B90811">
    <property type="entry name" value="B90811"/>
</dbReference>
<dbReference type="PIR" id="F85670">
    <property type="entry name" value="F85670"/>
</dbReference>
<dbReference type="RefSeq" id="NP_309485.3">
    <property type="nucleotide sequence ID" value="NC_002695.1"/>
</dbReference>
<dbReference type="RefSeq" id="WP_000589319.1">
    <property type="nucleotide sequence ID" value="NZ_VOAI01000018.1"/>
</dbReference>
<dbReference type="SMR" id="P58203"/>
<dbReference type="STRING" id="155864.Z1718"/>
<dbReference type="GeneID" id="913952"/>
<dbReference type="KEGG" id="ece:Z1718"/>
<dbReference type="KEGG" id="ecs:ECs_1458"/>
<dbReference type="PATRIC" id="fig|386585.9.peg.1559"/>
<dbReference type="eggNOG" id="COG1706">
    <property type="taxonomic scope" value="Bacteria"/>
</dbReference>
<dbReference type="HOGENOM" id="CLU_045235_1_0_6"/>
<dbReference type="OMA" id="LDTAHNT"/>
<dbReference type="Proteomes" id="UP000000558">
    <property type="component" value="Chromosome"/>
</dbReference>
<dbReference type="Proteomes" id="UP000002519">
    <property type="component" value="Chromosome"/>
</dbReference>
<dbReference type="GO" id="GO:0009428">
    <property type="term" value="C:bacterial-type flagellum basal body, distal rod, P ring"/>
    <property type="evidence" value="ECO:0007669"/>
    <property type="project" value="InterPro"/>
</dbReference>
<dbReference type="GO" id="GO:0030288">
    <property type="term" value="C:outer membrane-bounded periplasmic space"/>
    <property type="evidence" value="ECO:0007669"/>
    <property type="project" value="InterPro"/>
</dbReference>
<dbReference type="GO" id="GO:0005198">
    <property type="term" value="F:structural molecule activity"/>
    <property type="evidence" value="ECO:0007669"/>
    <property type="project" value="InterPro"/>
</dbReference>
<dbReference type="GO" id="GO:0071973">
    <property type="term" value="P:bacterial-type flagellum-dependent cell motility"/>
    <property type="evidence" value="ECO:0007669"/>
    <property type="project" value="InterPro"/>
</dbReference>
<dbReference type="HAMAP" id="MF_00416">
    <property type="entry name" value="FlgI"/>
    <property type="match status" value="1"/>
</dbReference>
<dbReference type="InterPro" id="IPR001782">
    <property type="entry name" value="Flag_FlgI"/>
</dbReference>
<dbReference type="NCBIfam" id="NF003676">
    <property type="entry name" value="PRK05303.1"/>
    <property type="match status" value="1"/>
</dbReference>
<dbReference type="PANTHER" id="PTHR30381">
    <property type="entry name" value="FLAGELLAR P-RING PERIPLASMIC PROTEIN FLGI"/>
    <property type="match status" value="1"/>
</dbReference>
<dbReference type="PANTHER" id="PTHR30381:SF0">
    <property type="entry name" value="FLAGELLAR P-RING PROTEIN"/>
    <property type="match status" value="1"/>
</dbReference>
<dbReference type="Pfam" id="PF02119">
    <property type="entry name" value="FlgI"/>
    <property type="match status" value="1"/>
</dbReference>
<dbReference type="PRINTS" id="PR01010">
    <property type="entry name" value="FLGPRINGFLGI"/>
</dbReference>
<keyword id="KW-0975">Bacterial flagellum</keyword>
<keyword id="KW-0574">Periplasm</keyword>
<keyword id="KW-1185">Reference proteome</keyword>
<keyword id="KW-0732">Signal</keyword>
<evidence type="ECO:0000250" key="1"/>
<evidence type="ECO:0000305" key="2"/>
<proteinExistence type="inferred from homology"/>
<protein>
    <recommendedName>
        <fullName>Flagellar P-ring protein</fullName>
    </recommendedName>
    <alternativeName>
        <fullName>Basal body P-ring protein</fullName>
    </alternativeName>
</protein>
<comment type="function">
    <text evidence="1">Assembles around the rod to form the L-ring and probably protects the motor/basal body from shearing forces during rotation.</text>
</comment>
<comment type="subunit">
    <text>The basal body constitutes a major portion of the flagellar organelle and consists of four rings (L,P,S, and M) mounted on a central rod.</text>
</comment>
<comment type="subcellular location">
    <subcellularLocation>
        <location>Periplasm</location>
    </subcellularLocation>
    <subcellularLocation>
        <location>Bacterial flagellum basal body</location>
    </subcellularLocation>
</comment>
<comment type="similarity">
    <text evidence="2">Belongs to the FlgI family.</text>
</comment>
<reference key="1">
    <citation type="journal article" date="2001" name="Nature">
        <title>Genome sequence of enterohaemorrhagic Escherichia coli O157:H7.</title>
        <authorList>
            <person name="Perna N.T."/>
            <person name="Plunkett G. III"/>
            <person name="Burland V."/>
            <person name="Mau B."/>
            <person name="Glasner J.D."/>
            <person name="Rose D.J."/>
            <person name="Mayhew G.F."/>
            <person name="Evans P.S."/>
            <person name="Gregor J."/>
            <person name="Kirkpatrick H.A."/>
            <person name="Posfai G."/>
            <person name="Hackett J."/>
            <person name="Klink S."/>
            <person name="Boutin A."/>
            <person name="Shao Y."/>
            <person name="Miller L."/>
            <person name="Grotbeck E.J."/>
            <person name="Davis N.W."/>
            <person name="Lim A."/>
            <person name="Dimalanta E.T."/>
            <person name="Potamousis K."/>
            <person name="Apodaca J."/>
            <person name="Anantharaman T.S."/>
            <person name="Lin J."/>
            <person name="Yen G."/>
            <person name="Schwartz D.C."/>
            <person name="Welch R.A."/>
            <person name="Blattner F.R."/>
        </authorList>
    </citation>
    <scope>NUCLEOTIDE SEQUENCE [LARGE SCALE GENOMIC DNA]</scope>
    <source>
        <strain>O157:H7 / EDL933 / ATCC 700927 / EHEC</strain>
    </source>
</reference>
<reference key="2">
    <citation type="journal article" date="2001" name="DNA Res.">
        <title>Complete genome sequence of enterohemorrhagic Escherichia coli O157:H7 and genomic comparison with a laboratory strain K-12.</title>
        <authorList>
            <person name="Hayashi T."/>
            <person name="Makino K."/>
            <person name="Ohnishi M."/>
            <person name="Kurokawa K."/>
            <person name="Ishii K."/>
            <person name="Yokoyama K."/>
            <person name="Han C.-G."/>
            <person name="Ohtsubo E."/>
            <person name="Nakayama K."/>
            <person name="Murata T."/>
            <person name="Tanaka M."/>
            <person name="Tobe T."/>
            <person name="Iida T."/>
            <person name="Takami H."/>
            <person name="Honda T."/>
            <person name="Sasakawa C."/>
            <person name="Ogasawara N."/>
            <person name="Yasunaga T."/>
            <person name="Kuhara S."/>
            <person name="Shiba T."/>
            <person name="Hattori M."/>
            <person name="Shinagawa H."/>
        </authorList>
    </citation>
    <scope>NUCLEOTIDE SEQUENCE [LARGE SCALE GENOMIC DNA]</scope>
    <source>
        <strain>O157:H7 / Sakai / RIMD 0509952 / EHEC</strain>
    </source>
</reference>
<feature type="signal peptide" evidence="1">
    <location>
        <begin position="1"/>
        <end position="19"/>
    </location>
</feature>
<feature type="chain" id="PRO_0000009501" description="Flagellar P-ring protein">
    <location>
        <begin position="20"/>
        <end position="365"/>
    </location>
</feature>
<name>FLGI_ECO57</name>